<feature type="chain" id="PRO_0000166028" description="Cytochrome b5">
    <location>
        <begin position="1"/>
        <end position="129"/>
    </location>
</feature>
<feature type="transmembrane region" description="Helical" evidence="2">
    <location>
        <begin position="104"/>
        <end position="124"/>
    </location>
</feature>
<feature type="domain" description="Cytochrome b5 heme-binding" evidence="3">
    <location>
        <begin position="8"/>
        <end position="84"/>
    </location>
</feature>
<feature type="binding site" description="axial binding residue" evidence="3">
    <location>
        <position position="43"/>
    </location>
    <ligand>
        <name>heme</name>
        <dbReference type="ChEBI" id="CHEBI:30413"/>
    </ligand>
    <ligandPart>
        <name>Fe</name>
        <dbReference type="ChEBI" id="CHEBI:18248"/>
    </ligandPart>
</feature>
<feature type="binding site" description="axial binding residue" evidence="3">
    <location>
        <position position="67"/>
    </location>
    <ligand>
        <name>heme</name>
        <dbReference type="ChEBI" id="CHEBI:30413"/>
    </ligand>
    <ligandPart>
        <name>Fe</name>
        <dbReference type="ChEBI" id="CHEBI:18248"/>
    </ligandPart>
</feature>
<keyword id="KW-0249">Electron transport</keyword>
<keyword id="KW-0256">Endoplasmic reticulum</keyword>
<keyword id="KW-0349">Heme</keyword>
<keyword id="KW-0408">Iron</keyword>
<keyword id="KW-0472">Membrane</keyword>
<keyword id="KW-0479">Metal-binding</keyword>
<keyword id="KW-0492">Microsome</keyword>
<keyword id="KW-0812">Transmembrane</keyword>
<keyword id="KW-1133">Transmembrane helix</keyword>
<keyword id="KW-0813">Transport</keyword>
<organism>
    <name type="scientific">Candida tropicalis</name>
    <name type="common">Yeast</name>
    <dbReference type="NCBI Taxonomy" id="5482"/>
    <lineage>
        <taxon>Eukaryota</taxon>
        <taxon>Fungi</taxon>
        <taxon>Dikarya</taxon>
        <taxon>Ascomycota</taxon>
        <taxon>Saccharomycotina</taxon>
        <taxon>Pichiomycetes</taxon>
        <taxon>Debaryomycetaceae</taxon>
        <taxon>Candida/Lodderomyces clade</taxon>
        <taxon>Candida</taxon>
    </lineage>
</organism>
<gene>
    <name type="primary">Cytb5</name>
</gene>
<comment type="function">
    <text evidence="1">Membrane bound hemoprotein which function as an electron carrier for several membrane bound oxygenases.</text>
</comment>
<comment type="subcellular location">
    <subcellularLocation>
        <location evidence="1">Endoplasmic reticulum membrane</location>
        <topology evidence="1">Single-pass membrane protein</topology>
        <orientation evidence="1">Cytoplasmic side</orientation>
    </subcellularLocation>
    <subcellularLocation>
        <location evidence="1">Microsome membrane</location>
        <topology evidence="1">Single-pass membrane protein</topology>
        <orientation evidence="1">Cytoplasmic side</orientation>
    </subcellularLocation>
</comment>
<comment type="similarity">
    <text evidence="4">Belongs to the cytochrome b5 family.</text>
</comment>
<accession>Q874I5</accession>
<evidence type="ECO:0000250" key="1"/>
<evidence type="ECO:0000255" key="2"/>
<evidence type="ECO:0000255" key="3">
    <source>
        <dbReference type="PROSITE-ProRule" id="PRU00279"/>
    </source>
</evidence>
<evidence type="ECO:0000305" key="4"/>
<protein>
    <recommendedName>
        <fullName>Cytochrome b5</fullName>
    </recommendedName>
</protein>
<name>CYB5_CANTR</name>
<dbReference type="EMBL" id="AY230508">
    <property type="protein sequence ID" value="AAO73962.1"/>
    <property type="molecule type" value="Genomic_DNA"/>
</dbReference>
<dbReference type="SMR" id="Q874I5"/>
<dbReference type="VEuPathDB" id="FungiDB:CTMYA2_059140"/>
<dbReference type="VEuPathDB" id="FungiDB:CTRG_05068"/>
<dbReference type="GO" id="GO:0005789">
    <property type="term" value="C:endoplasmic reticulum membrane"/>
    <property type="evidence" value="ECO:0007669"/>
    <property type="project" value="UniProtKB-SubCell"/>
</dbReference>
<dbReference type="GO" id="GO:0020037">
    <property type="term" value="F:heme binding"/>
    <property type="evidence" value="ECO:0007669"/>
    <property type="project" value="InterPro"/>
</dbReference>
<dbReference type="GO" id="GO:0046872">
    <property type="term" value="F:metal ion binding"/>
    <property type="evidence" value="ECO:0007669"/>
    <property type="project" value="UniProtKB-KW"/>
</dbReference>
<dbReference type="GO" id="GO:0016126">
    <property type="term" value="P:sterol biosynthetic process"/>
    <property type="evidence" value="ECO:0007669"/>
    <property type="project" value="TreeGrafter"/>
</dbReference>
<dbReference type="FunFam" id="3.10.120.10:FF:000002">
    <property type="entry name" value="Cytochrome b5 type B"/>
    <property type="match status" value="1"/>
</dbReference>
<dbReference type="Gene3D" id="3.10.120.10">
    <property type="entry name" value="Cytochrome b5-like heme/steroid binding domain"/>
    <property type="match status" value="1"/>
</dbReference>
<dbReference type="InterPro" id="IPR001199">
    <property type="entry name" value="Cyt_B5-like_heme/steroid-bd"/>
</dbReference>
<dbReference type="InterPro" id="IPR036400">
    <property type="entry name" value="Cyt_B5-like_heme/steroid_sf"/>
</dbReference>
<dbReference type="InterPro" id="IPR018506">
    <property type="entry name" value="Cyt_B5_heme-BS"/>
</dbReference>
<dbReference type="InterPro" id="IPR050668">
    <property type="entry name" value="Cytochrome_b5"/>
</dbReference>
<dbReference type="PANTHER" id="PTHR19359">
    <property type="entry name" value="CYTOCHROME B5"/>
    <property type="match status" value="1"/>
</dbReference>
<dbReference type="PANTHER" id="PTHR19359:SF150">
    <property type="entry name" value="CYTOCHROME B5"/>
    <property type="match status" value="1"/>
</dbReference>
<dbReference type="Pfam" id="PF00173">
    <property type="entry name" value="Cyt-b5"/>
    <property type="match status" value="1"/>
</dbReference>
<dbReference type="PRINTS" id="PR00363">
    <property type="entry name" value="CYTOCHROMEB5"/>
</dbReference>
<dbReference type="SMART" id="SM01117">
    <property type="entry name" value="Cyt-b5"/>
    <property type="match status" value="1"/>
</dbReference>
<dbReference type="SUPFAM" id="SSF55856">
    <property type="entry name" value="Cytochrome b5-like heme/steroid binding domain"/>
    <property type="match status" value="1"/>
</dbReference>
<dbReference type="PROSITE" id="PS00191">
    <property type="entry name" value="CYTOCHROME_B5_1"/>
    <property type="match status" value="1"/>
</dbReference>
<dbReference type="PROSITE" id="PS50255">
    <property type="entry name" value="CYTOCHROME_B5_2"/>
    <property type="match status" value="1"/>
</dbReference>
<sequence>MTDTDTTTTIYTHEEVAQHTTHDDLWVILNGKVYNISNYIDEHPGGEEVILDCAGTDATEAFDDIGHSDEAHEILEKLYIGNLKGAKIVEAKHAQSFSTEEDSGINFPLIAVGVFLAAFGVYYYKTNFA</sequence>
<proteinExistence type="inferred from homology"/>
<reference key="1">
    <citation type="journal article" date="2003" name="Appl. Environ. Microbiol.">
        <title>Identification and characterization of the CYP52 family of Candida tropicalis ATCC 20336, important for the conversion of fatty acids and alkanes to alpha,omega-dicarboxylic acids.</title>
        <authorList>
            <person name="Craft D.L."/>
            <person name="Madduri K."/>
            <person name="Eshoo M."/>
            <person name="Wilson R."/>
        </authorList>
    </citation>
    <scope>NUCLEOTIDE SEQUENCE [GENOMIC DNA]</scope>
    <source>
        <strain>ATCC 20336 / pK233 / NCYC 997</strain>
    </source>
</reference>